<name>DPE2_ARATH</name>
<accession>Q8RXD9</accession>
<accession>O22198</accession>
<proteinExistence type="evidence at protein level"/>
<reference key="1">
    <citation type="journal article" date="1999" name="Nature">
        <title>Sequence and analysis of chromosome 2 of the plant Arabidopsis thaliana.</title>
        <authorList>
            <person name="Lin X."/>
            <person name="Kaul S."/>
            <person name="Rounsley S.D."/>
            <person name="Shea T.P."/>
            <person name="Benito M.-I."/>
            <person name="Town C.D."/>
            <person name="Fujii C.Y."/>
            <person name="Mason T.M."/>
            <person name="Bowman C.L."/>
            <person name="Barnstead M.E."/>
            <person name="Feldblyum T.V."/>
            <person name="Buell C.R."/>
            <person name="Ketchum K.A."/>
            <person name="Lee J.J."/>
            <person name="Ronning C.M."/>
            <person name="Koo H.L."/>
            <person name="Moffat K.S."/>
            <person name="Cronin L.A."/>
            <person name="Shen M."/>
            <person name="Pai G."/>
            <person name="Van Aken S."/>
            <person name="Umayam L."/>
            <person name="Tallon L.J."/>
            <person name="Gill J.E."/>
            <person name="Adams M.D."/>
            <person name="Carrera A.J."/>
            <person name="Creasy T.H."/>
            <person name="Goodman H.M."/>
            <person name="Somerville C.R."/>
            <person name="Copenhaver G.P."/>
            <person name="Preuss D."/>
            <person name="Nierman W.C."/>
            <person name="White O."/>
            <person name="Eisen J.A."/>
            <person name="Salzberg S.L."/>
            <person name="Fraser C.M."/>
            <person name="Venter J.C."/>
        </authorList>
    </citation>
    <scope>NUCLEOTIDE SEQUENCE [LARGE SCALE GENOMIC DNA]</scope>
    <source>
        <strain>cv. Columbia</strain>
    </source>
</reference>
<reference key="2">
    <citation type="journal article" date="2017" name="Plant J.">
        <title>Araport11: a complete reannotation of the Arabidopsis thaliana reference genome.</title>
        <authorList>
            <person name="Cheng C.Y."/>
            <person name="Krishnakumar V."/>
            <person name="Chan A.P."/>
            <person name="Thibaud-Nissen F."/>
            <person name="Schobel S."/>
            <person name="Town C.D."/>
        </authorList>
    </citation>
    <scope>GENOME REANNOTATION</scope>
    <source>
        <strain>cv. Columbia</strain>
    </source>
</reference>
<reference key="3">
    <citation type="journal article" date="2003" name="Science">
        <title>Empirical analysis of transcriptional activity in the Arabidopsis genome.</title>
        <authorList>
            <person name="Yamada K."/>
            <person name="Lim J."/>
            <person name="Dale J.M."/>
            <person name="Chen H."/>
            <person name="Shinn P."/>
            <person name="Palm C.J."/>
            <person name="Southwick A.M."/>
            <person name="Wu H.C."/>
            <person name="Kim C.J."/>
            <person name="Nguyen M."/>
            <person name="Pham P.K."/>
            <person name="Cheuk R.F."/>
            <person name="Karlin-Newmann G."/>
            <person name="Liu S.X."/>
            <person name="Lam B."/>
            <person name="Sakano H."/>
            <person name="Wu T."/>
            <person name="Yu G."/>
            <person name="Miranda M."/>
            <person name="Quach H.L."/>
            <person name="Tripp M."/>
            <person name="Chang C.H."/>
            <person name="Lee J.M."/>
            <person name="Toriumi M.J."/>
            <person name="Chan M.M."/>
            <person name="Tang C.C."/>
            <person name="Onodera C.S."/>
            <person name="Deng J.M."/>
            <person name="Akiyama K."/>
            <person name="Ansari Y."/>
            <person name="Arakawa T."/>
            <person name="Banh J."/>
            <person name="Banno F."/>
            <person name="Bowser L."/>
            <person name="Brooks S.Y."/>
            <person name="Carninci P."/>
            <person name="Chao Q."/>
            <person name="Choy N."/>
            <person name="Enju A."/>
            <person name="Goldsmith A.D."/>
            <person name="Gurjal M."/>
            <person name="Hansen N.F."/>
            <person name="Hayashizaki Y."/>
            <person name="Johnson-Hopson C."/>
            <person name="Hsuan V.W."/>
            <person name="Iida K."/>
            <person name="Karnes M."/>
            <person name="Khan S."/>
            <person name="Koesema E."/>
            <person name="Ishida J."/>
            <person name="Jiang P.X."/>
            <person name="Jones T."/>
            <person name="Kawai J."/>
            <person name="Kamiya A."/>
            <person name="Meyers C."/>
            <person name="Nakajima M."/>
            <person name="Narusaka M."/>
            <person name="Seki M."/>
            <person name="Sakurai T."/>
            <person name="Satou M."/>
            <person name="Tamse R."/>
            <person name="Vaysberg M."/>
            <person name="Wallender E.K."/>
            <person name="Wong C."/>
            <person name="Yamamura Y."/>
            <person name="Yuan S."/>
            <person name="Shinozaki K."/>
            <person name="Davis R.W."/>
            <person name="Theologis A."/>
            <person name="Ecker J.R."/>
        </authorList>
    </citation>
    <scope>NUCLEOTIDE SEQUENCE [LARGE SCALE MRNA]</scope>
    <source>
        <strain>cv. Columbia</strain>
    </source>
</reference>
<reference key="4">
    <citation type="journal article" date="2004" name="Planta">
        <title>The role of amylomaltase in maltose metabolism in the cytosol of photosynthetic cells.</title>
        <authorList>
            <person name="Lu Y."/>
            <person name="Sharkey T.D."/>
        </authorList>
    </citation>
    <scope>DISRUPTION PHENOTYPE</scope>
    <scope>INDUCTION</scope>
</reference>
<reference key="5">
    <citation type="journal article" date="2004" name="Plant J.">
        <title>A cytosolic glucosyltransferase is required for conversion of starch to sucrose in Arabidopsis leaves at night.</title>
        <authorList>
            <person name="Chia T."/>
            <person name="Thorneycroft D."/>
            <person name="Chapple A."/>
            <person name="Messerli G."/>
            <person name="Chen J."/>
            <person name="Zeeman S.C."/>
            <person name="Smith S.M."/>
            <person name="Smith A.M."/>
        </authorList>
    </citation>
    <scope>FUNCTION</scope>
    <scope>SUBCELLULAR LOCATION</scope>
    <scope>DISRUPTION PHENOTYPE</scope>
</reference>
<reference key="6">
    <citation type="journal article" date="2005" name="Plant Physiol.">
        <title>beta-Maltose is the metabolically active anomer of maltose during transitory starch degradation.</title>
        <authorList>
            <person name="Weise S.E."/>
            <person name="Kim K.S."/>
            <person name="Stewart R.P."/>
            <person name="Sharkey T.D."/>
        </authorList>
    </citation>
    <scope>DISRUPTION PHENOTYPE</scope>
</reference>
<reference key="7">
    <citation type="journal article" date="2005" name="Plant Physiol.">
        <title>Daylength and circadian effects on starch degradation and maltose metabolism.</title>
        <authorList>
            <person name="Lu Y."/>
            <person name="Gehan J.P."/>
            <person name="Sharkey T.D."/>
        </authorList>
    </citation>
    <scope>INDUCTION</scope>
</reference>
<reference key="8">
    <citation type="journal article" date="2006" name="Plant Cell">
        <title>Mutants of Arabidopsis lacking starch branching enzyme II substitute plastidial starch synthesis by cytoplasmic maltose accumulation.</title>
        <authorList>
            <person name="Dumez S."/>
            <person name="Wattebled F."/>
            <person name="Dauvillee D."/>
            <person name="Delvalle D."/>
            <person name="Planchot V."/>
            <person name="Ball S.G."/>
            <person name="D'Hulst C."/>
        </authorList>
    </citation>
    <scope>FUNCTION</scope>
</reference>
<reference key="9">
    <citation type="journal article" date="2006" name="Planta">
        <title>Cellular and organ level localization of maltose in maltose-excess Arabidopsis mutants.</title>
        <authorList>
            <person name="Lu Y."/>
            <person name="Steichen J.M."/>
            <person name="Weise S.E."/>
            <person name="Sharkey T.D."/>
        </authorList>
    </citation>
    <scope>SUBCELLULAR LOCATION</scope>
</reference>
<reference key="10">
    <citation type="journal article" date="2006" name="Plant J.">
        <title>A transglucosidase necessary for starch degradation and maltose metabolism in leaves at night acts on cytosolic heteroglycans (SHG).</title>
        <authorList>
            <person name="Fettke J."/>
            <person name="Chia T."/>
            <person name="Eckermann N."/>
            <person name="Smith A."/>
            <person name="Steup M."/>
        </authorList>
    </citation>
    <scope>FUNCTION</scope>
</reference>
<reference key="11">
    <citation type="journal article" date="2007" name="Mol. Cell. Proteomics">
        <title>Multidimensional protein identification technology (MudPIT) analysis of ubiquitinated proteins in plants.</title>
        <authorList>
            <person name="Maor R."/>
            <person name="Jones A."/>
            <person name="Nuehse T.S."/>
            <person name="Studholme D.J."/>
            <person name="Peck S.C."/>
            <person name="Shirasu K."/>
        </authorList>
    </citation>
    <scope>IDENTIFICATION BY MASS SPECTROMETRY [LARGE SCALE ANALYSIS]</scope>
    <source>
        <strain>cv. Landsberg erecta</strain>
    </source>
</reference>
<reference key="12">
    <citation type="journal article" date="2010" name="Planta">
        <title>Repression of both isoforms of disproportionating enzyme leads to higher malto-oligosaccharide content and reduced growth in potato.</title>
        <authorList>
            <person name="Luetken H."/>
            <person name="Lloyd J.R."/>
            <person name="Glaring M.A."/>
            <person name="Baunsgaard L."/>
            <person name="Laursen K.H."/>
            <person name="Haldrup A."/>
            <person name="Kossmann J."/>
            <person name="Blennow A."/>
        </authorList>
    </citation>
    <scope>SUBCELLULAR LOCATION</scope>
</reference>
<reference key="13">
    <citation type="journal article" date="2011" name="J. Plant Physiol.">
        <title>Starch-related cytosolic heteroglycans in roots from Arabidopsis thaliana.</title>
        <authorList>
            <person name="Malinova I."/>
            <person name="Steup M."/>
            <person name="Fettke J."/>
        </authorList>
    </citation>
    <scope>FUNCTION</scope>
</reference>
<reference key="14">
    <citation type="journal article" date="2011" name="Mol. Plant">
        <title>Proteomics analysis reveals post-translational mechanisms for cold-induced metabolic changes in Arabidopsis.</title>
        <authorList>
            <person name="Li T."/>
            <person name="Xu S.L."/>
            <person name="Oses-Prieto J.A."/>
            <person name="Putil S."/>
            <person name="Xu P."/>
            <person name="Wang R.J."/>
            <person name="Li K.H."/>
            <person name="Maltby D.A."/>
            <person name="An L.H."/>
            <person name="Burlingame A.L."/>
            <person name="Deng Z.P."/>
            <person name="Wang Z.Y."/>
        </authorList>
    </citation>
    <scope>FUNCTION</scope>
    <scope>ACTIVITY REGULATION</scope>
    <scope>DISRUPTION PHENOTYPE</scope>
</reference>
<reference key="15">
    <citation type="journal article" date="2012" name="Mol. Cell. Proteomics">
        <title>Comparative large-scale characterisation of plant vs. mammal proteins reveals similar and idiosyncratic N-alpha acetylation features.</title>
        <authorList>
            <person name="Bienvenut W.V."/>
            <person name="Sumpton D."/>
            <person name="Martinez A."/>
            <person name="Lilla S."/>
            <person name="Espagne C."/>
            <person name="Meinnel T."/>
            <person name="Giglione C."/>
        </authorList>
    </citation>
    <scope>ACETYLATION [LARGE SCALE ANALYSIS] AT MET-1</scope>
    <scope>IDENTIFICATION BY MASS SPECTROMETRY [LARGE SCALE ANALYSIS]</scope>
</reference>
<keyword id="KW-0007">Acetylation</keyword>
<keyword id="KW-0119">Carbohydrate metabolism</keyword>
<keyword id="KW-0963">Cytoplasm</keyword>
<keyword id="KW-0328">Glycosyltransferase</keyword>
<keyword id="KW-1185">Reference proteome</keyword>
<keyword id="KW-0677">Repeat</keyword>
<keyword id="KW-0808">Transferase</keyword>
<comment type="function">
    <text evidence="4 8 9 11 12">Cytosolic alpha-glucanotransferase essential for the cytosolic metabolism of maltose, an intermediate on the pathway by which starch is converted to sucrose in leaves at night. Metabolizes maltose exported from the chloroplast and is specific for beta-maltose. May play a role in freezing tolerance. Temperature drop induces inactivation of DPE2 that leads to rapid accumulation of maltose, a solute that protects cells from freezing damage.</text>
</comment>
<comment type="catalytic activity">
    <reaction>
        <text>Transfers a segment of a (1-&gt;4)-alpha-D-glucan to a new position in an acceptor, which may be glucose or a (1-&gt;4)-alpha-D-glucan.</text>
        <dbReference type="EC" id="2.4.1.25"/>
    </reaction>
</comment>
<comment type="activity regulation">
    <text evidence="11">Inactivated in response to cold stress.</text>
</comment>
<comment type="subcellular location">
    <subcellularLocation>
        <location evidence="4 7 10">Cytoplasm</location>
        <location evidence="4 7 10">Cytosol</location>
    </subcellularLocation>
</comment>
<comment type="induction">
    <text evidence="3 6">Circadian-regulation with a peak in expression in the middle of the light period.</text>
</comment>
<comment type="disruption phenotype">
    <text evidence="3 4 5 11">Dwarf plants with yellowish leaves that accumulate large amounts of maltose. Increased tolerance to cold.</text>
</comment>
<comment type="similarity">
    <text evidence="13">Belongs to the disproportionating enzyme family.</text>
</comment>
<comment type="sequence caution" evidence="13">
    <conflict type="erroneous gene model prediction">
        <sequence resource="EMBL-CDS" id="AAB86444"/>
    </conflict>
</comment>
<gene>
    <name type="primary">DPE2</name>
    <name type="ordered locus">At2g40840</name>
    <name type="ORF">T20B5.4</name>
</gene>
<feature type="chain" id="PRO_0000407919" description="4-alpha-glucanotransferase DPE2">
    <location>
        <begin position="1"/>
        <end position="955"/>
    </location>
</feature>
<feature type="domain" description="CBM20 1" evidence="1">
    <location>
        <begin position="13"/>
        <end position="122"/>
    </location>
</feature>
<feature type="domain" description="CBM20 2" evidence="1">
    <location>
        <begin position="157"/>
        <end position="270"/>
    </location>
</feature>
<feature type="region of interest" description="Disordered" evidence="2">
    <location>
        <begin position="925"/>
        <end position="955"/>
    </location>
</feature>
<feature type="modified residue" description="N-acetylmethionine" evidence="14">
    <location>
        <position position="1"/>
    </location>
</feature>
<organism>
    <name type="scientific">Arabidopsis thaliana</name>
    <name type="common">Mouse-ear cress</name>
    <dbReference type="NCBI Taxonomy" id="3702"/>
    <lineage>
        <taxon>Eukaryota</taxon>
        <taxon>Viridiplantae</taxon>
        <taxon>Streptophyta</taxon>
        <taxon>Embryophyta</taxon>
        <taxon>Tracheophyta</taxon>
        <taxon>Spermatophyta</taxon>
        <taxon>Magnoliopsida</taxon>
        <taxon>eudicotyledons</taxon>
        <taxon>Gunneridae</taxon>
        <taxon>Pentapetalae</taxon>
        <taxon>rosids</taxon>
        <taxon>malvids</taxon>
        <taxon>Brassicales</taxon>
        <taxon>Brassicaceae</taxon>
        <taxon>Camelineae</taxon>
        <taxon>Arabidopsis</taxon>
    </lineage>
</organism>
<sequence length="955" mass="109777">MMNLGSLSLSTSKSSKPMVSISFWIPYFTHWGESLLVCGSAPGLGSGNVKKGLLLKPSQQDDQLIWSGSVSVPPGFSSDYCYYVVDDSKSVLRSEFGMKRKLVVPETLTGGESVHLRDLWQSGDQALPFRSAFKDVIFHHSFDVKVEKPLGVFMNKSDQDDSVVVQFKICCPDIGEGTSVYVLGTPEKLGNWKVENGLRLNYVDDSIWEADCLIPKADFPIKYRYCKVQKEDSIGFESGGNRELSLHSIGSKQEYIVMSDGLFRAMPWRGAGVAVPMFSVRSEDDVGVGEFLDLKLLVDWAVDSGLHLVQLLPVNDTSVHKMWWDSYPYSSLSVFALHPLYLRVQALSERLPEDIKEEIQKAKNQLDKNDVDYEATMETKLSIAKKIFDIEKDQTLNSSTFQKFFSENEGWLKPYAAFCFLRDFFETSDHSQWGTFSDYTDDKLEKLISKDNLHYNTICFHYYIQYHLHVQLSAAAEYARKKGVVLKGDLPIGVDRNSVDTWVYRNLFRMNTSTGAPPDYFDKNGQNWGFPTYNWEEMSKDNYAWWRARLTQMGKYFTAYRIDHILGFFRIWELPAHAMTGLVGKFRPSIPLSQEELEKEGIWDFDRLSKPYIQKKFLEEKFGDFWPFIASNFLNETQKDMYEFKEDCNTEKKIVAKLKSLAEKSLLLENEDKVRRDVFDILRNVVLIKDPEDARKFYPRFNIEDTSSFQDLDDHSKNVLKRLYYDYYFQRQEDLWRKNALKTLPALLNSSNMLACGEDLGLIPSCVHPVMQELGLVGLRIQRMPSESDVKFGIPSNYDYMTVCAPSCHDCSTLRAWWEEDEERRQQYFKEVIGVDGIPPSQCIPEITHFILRQHVEAPSMWAIFPLQDMMALKEEYTTRPATEETINDPTNPKHYWRYRVHVTLDSLLKDTDLKSTIKNLVSSSGRSVPANVSGEDINKSRGEVIANGSTKPNP</sequence>
<evidence type="ECO:0000255" key="1">
    <source>
        <dbReference type="PROSITE-ProRule" id="PRU00594"/>
    </source>
</evidence>
<evidence type="ECO:0000256" key="2">
    <source>
        <dbReference type="SAM" id="MobiDB-lite"/>
    </source>
</evidence>
<evidence type="ECO:0000269" key="3">
    <source>
    </source>
</evidence>
<evidence type="ECO:0000269" key="4">
    <source>
    </source>
</evidence>
<evidence type="ECO:0000269" key="5">
    <source>
    </source>
</evidence>
<evidence type="ECO:0000269" key="6">
    <source>
    </source>
</evidence>
<evidence type="ECO:0000269" key="7">
    <source>
    </source>
</evidence>
<evidence type="ECO:0000269" key="8">
    <source>
    </source>
</evidence>
<evidence type="ECO:0000269" key="9">
    <source>
    </source>
</evidence>
<evidence type="ECO:0000269" key="10">
    <source>
    </source>
</evidence>
<evidence type="ECO:0000269" key="11">
    <source>
    </source>
</evidence>
<evidence type="ECO:0000269" key="12">
    <source>
    </source>
</evidence>
<evidence type="ECO:0000305" key="13"/>
<evidence type="ECO:0007744" key="14">
    <source>
    </source>
</evidence>
<protein>
    <recommendedName>
        <fullName>4-alpha-glucanotransferase DPE2</fullName>
        <ecNumber>2.4.1.25</ecNumber>
    </recommendedName>
    <alternativeName>
        <fullName>Amylomaltase</fullName>
    </alternativeName>
    <alternativeName>
        <fullName>Disproportionating enzyme</fullName>
        <shortName>D-enzyme</shortName>
    </alternativeName>
    <alternativeName>
        <fullName>Protein DISPROPORTIONATING ENZYME 2</fullName>
    </alternativeName>
</protein>
<dbReference type="EC" id="2.4.1.25"/>
<dbReference type="EMBL" id="AC002409">
    <property type="protein sequence ID" value="AAB86444.1"/>
    <property type="status" value="ALT_SEQ"/>
    <property type="molecule type" value="Genomic_DNA"/>
</dbReference>
<dbReference type="EMBL" id="CP002685">
    <property type="protein sequence ID" value="AEC09889.1"/>
    <property type="molecule type" value="Genomic_DNA"/>
</dbReference>
<dbReference type="EMBL" id="AY081315">
    <property type="protein sequence ID" value="AAL91204.1"/>
    <property type="molecule type" value="mRNA"/>
</dbReference>
<dbReference type="EMBL" id="BT010364">
    <property type="protein sequence ID" value="AAQ56807.1"/>
    <property type="molecule type" value="mRNA"/>
</dbReference>
<dbReference type="PIR" id="T00748">
    <property type="entry name" value="T00748"/>
</dbReference>
<dbReference type="RefSeq" id="NP_181616.3">
    <property type="nucleotide sequence ID" value="NM_129647.4"/>
</dbReference>
<dbReference type="SMR" id="Q8RXD9"/>
<dbReference type="BioGRID" id="4019">
    <property type="interactions" value="3"/>
</dbReference>
<dbReference type="FunCoup" id="Q8RXD9">
    <property type="interactions" value="420"/>
</dbReference>
<dbReference type="STRING" id="3702.Q8RXD9"/>
<dbReference type="CAZy" id="CBM20">
    <property type="family name" value="Carbohydrate-Binding Module Family 20"/>
</dbReference>
<dbReference type="CAZy" id="GH77">
    <property type="family name" value="Glycoside Hydrolase Family 77"/>
</dbReference>
<dbReference type="iPTMnet" id="Q8RXD9"/>
<dbReference type="PaxDb" id="3702-AT2G40840.1"/>
<dbReference type="ProteomicsDB" id="220485"/>
<dbReference type="EnsemblPlants" id="AT2G40840.1">
    <property type="protein sequence ID" value="AT2G40840.1"/>
    <property type="gene ID" value="AT2G40840"/>
</dbReference>
<dbReference type="GeneID" id="818682"/>
<dbReference type="Gramene" id="AT2G40840.1">
    <property type="protein sequence ID" value="AT2G40840.1"/>
    <property type="gene ID" value="AT2G40840"/>
</dbReference>
<dbReference type="KEGG" id="ath:AT2G40840"/>
<dbReference type="Araport" id="AT2G40840"/>
<dbReference type="TAIR" id="AT2G40840">
    <property type="gene designation" value="DPE2"/>
</dbReference>
<dbReference type="eggNOG" id="ENOG502QR3V">
    <property type="taxonomic scope" value="Eukaryota"/>
</dbReference>
<dbReference type="HOGENOM" id="CLU_014132_0_0_1"/>
<dbReference type="InParanoid" id="Q8RXD9"/>
<dbReference type="OMA" id="HYEFKED"/>
<dbReference type="PhylomeDB" id="Q8RXD9"/>
<dbReference type="BioCyc" id="ARA:AT2G40840-MONOMER"/>
<dbReference type="BRENDA" id="2.4.1.25">
    <property type="organism ID" value="399"/>
</dbReference>
<dbReference type="PRO" id="PR:Q8RXD9"/>
<dbReference type="Proteomes" id="UP000006548">
    <property type="component" value="Chromosome 2"/>
</dbReference>
<dbReference type="ExpressionAtlas" id="Q8RXD9">
    <property type="expression patterns" value="baseline and differential"/>
</dbReference>
<dbReference type="GO" id="GO:0005829">
    <property type="term" value="C:cytosol"/>
    <property type="evidence" value="ECO:0000314"/>
    <property type="project" value="TAIR"/>
</dbReference>
<dbReference type="GO" id="GO:0004134">
    <property type="term" value="F:4-alpha-glucanotransferase activity"/>
    <property type="evidence" value="ECO:0000314"/>
    <property type="project" value="TAIR"/>
</dbReference>
<dbReference type="GO" id="GO:0010297">
    <property type="term" value="F:heteropolysaccharide binding"/>
    <property type="evidence" value="ECO:0000314"/>
    <property type="project" value="TAIR"/>
</dbReference>
<dbReference type="GO" id="GO:2001070">
    <property type="term" value="F:starch binding"/>
    <property type="evidence" value="ECO:0007669"/>
    <property type="project" value="InterPro"/>
</dbReference>
<dbReference type="GO" id="GO:0000025">
    <property type="term" value="P:maltose catabolic process"/>
    <property type="evidence" value="ECO:0000314"/>
    <property type="project" value="TAIR"/>
</dbReference>
<dbReference type="GO" id="GO:0000023">
    <property type="term" value="P:maltose metabolic process"/>
    <property type="evidence" value="ECO:0000315"/>
    <property type="project" value="TAIR"/>
</dbReference>
<dbReference type="GO" id="GO:0005976">
    <property type="term" value="P:polysaccharide metabolic process"/>
    <property type="evidence" value="ECO:0000304"/>
    <property type="project" value="TAIR"/>
</dbReference>
<dbReference type="GO" id="GO:0005983">
    <property type="term" value="P:starch catabolic process"/>
    <property type="evidence" value="ECO:0000304"/>
    <property type="project" value="TAIR"/>
</dbReference>
<dbReference type="CDD" id="cd05815">
    <property type="entry name" value="CBM20_DPE2_repeat1"/>
    <property type="match status" value="1"/>
</dbReference>
<dbReference type="CDD" id="cd05816">
    <property type="entry name" value="CBM20_DPE2_repeat2"/>
    <property type="match status" value="1"/>
</dbReference>
<dbReference type="Gene3D" id="3.20.20.80">
    <property type="entry name" value="Glycosidases"/>
    <property type="match status" value="2"/>
</dbReference>
<dbReference type="Gene3D" id="2.60.40.10">
    <property type="entry name" value="Immunoglobulins"/>
    <property type="match status" value="2"/>
</dbReference>
<dbReference type="InterPro" id="IPR013784">
    <property type="entry name" value="Carb-bd-like_fold"/>
</dbReference>
<dbReference type="InterPro" id="IPR002044">
    <property type="entry name" value="CBM20"/>
</dbReference>
<dbReference type="InterPro" id="IPR034840">
    <property type="entry name" value="CBM20_DPE2_1"/>
</dbReference>
<dbReference type="InterPro" id="IPR034841">
    <property type="entry name" value="CBM20_DPE2_2"/>
</dbReference>
<dbReference type="InterPro" id="IPR003385">
    <property type="entry name" value="Glyco_hydro_77"/>
</dbReference>
<dbReference type="InterPro" id="IPR017853">
    <property type="entry name" value="Glycoside_hydrolase_SF"/>
</dbReference>
<dbReference type="InterPro" id="IPR013783">
    <property type="entry name" value="Ig-like_fold"/>
</dbReference>
<dbReference type="PANTHER" id="PTHR32518">
    <property type="match status" value="1"/>
</dbReference>
<dbReference type="PANTHER" id="PTHR32518:SF3">
    <property type="entry name" value="4-ALPHA-GLUCANOTRANSFERASE"/>
    <property type="match status" value="1"/>
</dbReference>
<dbReference type="Pfam" id="PF00686">
    <property type="entry name" value="CBM_20"/>
    <property type="match status" value="2"/>
</dbReference>
<dbReference type="Pfam" id="PF02446">
    <property type="entry name" value="Glyco_hydro_77"/>
    <property type="match status" value="1"/>
</dbReference>
<dbReference type="SMART" id="SM01065">
    <property type="entry name" value="CBM_2"/>
    <property type="match status" value="2"/>
</dbReference>
<dbReference type="SUPFAM" id="SSF51445">
    <property type="entry name" value="(Trans)glycosidases"/>
    <property type="match status" value="1"/>
</dbReference>
<dbReference type="SUPFAM" id="SSF49452">
    <property type="entry name" value="Starch-binding domain-like"/>
    <property type="match status" value="2"/>
</dbReference>
<dbReference type="PROSITE" id="PS51166">
    <property type="entry name" value="CBM20"/>
    <property type="match status" value="2"/>
</dbReference>